<sequence>MSPIFDALVPMVVEQTSRGERSYDIYSRLLKERVIFLTGQVEDHMANLVVAQLLFLESENPDKDIFLYINSPGGSVTAGMSIYDTMQFIKPNVSTVCMGQACSMGAFLLAGGAPGKRYVLPNSRVMIHQPLGGFQGQASDIQIHAQEILTIKNKLNRLLAEHTGQPIEVIERDTDRDNFMSADQAVEYGLVDAVLKHRGE</sequence>
<proteinExistence type="inferred from homology"/>
<accession>A5F6X0</accession>
<accession>C3M1X5</accession>
<gene>
    <name evidence="1" type="primary">clpP</name>
    <name type="ordered locus">VC0395_A1512</name>
    <name type="ordered locus">VC395_2037</name>
</gene>
<protein>
    <recommendedName>
        <fullName evidence="1">ATP-dependent Clp protease proteolytic subunit</fullName>
        <ecNumber evidence="1">3.4.21.92</ecNumber>
    </recommendedName>
    <alternativeName>
        <fullName evidence="1">Endopeptidase Clp</fullName>
    </alternativeName>
</protein>
<evidence type="ECO:0000255" key="1">
    <source>
        <dbReference type="HAMAP-Rule" id="MF_00444"/>
    </source>
</evidence>
<comment type="function">
    <text evidence="1">Cleaves peptides in various proteins in a process that requires ATP hydrolysis. Has a chymotrypsin-like activity. Plays a major role in the degradation of misfolded proteins.</text>
</comment>
<comment type="catalytic activity">
    <reaction evidence="1">
        <text>Hydrolysis of proteins to small peptides in the presence of ATP and magnesium. alpha-casein is the usual test substrate. In the absence of ATP, only oligopeptides shorter than five residues are hydrolyzed (such as succinyl-Leu-Tyr-|-NHMec, and Leu-Tyr-Leu-|-Tyr-Trp, in which cleavage of the -Tyr-|-Leu- and -Tyr-|-Trp bonds also occurs).</text>
        <dbReference type="EC" id="3.4.21.92"/>
    </reaction>
</comment>
<comment type="subunit">
    <text evidence="1">Fourteen ClpP subunits assemble into 2 heptameric rings which stack back to back to give a disk-like structure with a central cavity, resembling the structure of eukaryotic proteasomes.</text>
</comment>
<comment type="subcellular location">
    <subcellularLocation>
        <location evidence="1">Cytoplasm</location>
    </subcellularLocation>
</comment>
<comment type="similarity">
    <text evidence="1">Belongs to the peptidase S14 family.</text>
</comment>
<organism>
    <name type="scientific">Vibrio cholerae serotype O1 (strain ATCC 39541 / Classical Ogawa 395 / O395)</name>
    <dbReference type="NCBI Taxonomy" id="345073"/>
    <lineage>
        <taxon>Bacteria</taxon>
        <taxon>Pseudomonadati</taxon>
        <taxon>Pseudomonadota</taxon>
        <taxon>Gammaproteobacteria</taxon>
        <taxon>Vibrionales</taxon>
        <taxon>Vibrionaceae</taxon>
        <taxon>Vibrio</taxon>
    </lineage>
</organism>
<reference key="1">
    <citation type="submission" date="2007-03" db="EMBL/GenBank/DDBJ databases">
        <authorList>
            <person name="Heidelberg J."/>
        </authorList>
    </citation>
    <scope>NUCLEOTIDE SEQUENCE [LARGE SCALE GENOMIC DNA]</scope>
    <source>
        <strain>ATCC 39541 / Classical Ogawa 395 / O395</strain>
    </source>
</reference>
<reference key="2">
    <citation type="journal article" date="2008" name="PLoS ONE">
        <title>A recalibrated molecular clock and independent origins for the cholera pandemic clones.</title>
        <authorList>
            <person name="Feng L."/>
            <person name="Reeves P.R."/>
            <person name="Lan R."/>
            <person name="Ren Y."/>
            <person name="Gao C."/>
            <person name="Zhou Z."/>
            <person name="Ren Y."/>
            <person name="Cheng J."/>
            <person name="Wang W."/>
            <person name="Wang J."/>
            <person name="Qian W."/>
            <person name="Li D."/>
            <person name="Wang L."/>
        </authorList>
    </citation>
    <scope>NUCLEOTIDE SEQUENCE [LARGE SCALE GENOMIC DNA]</scope>
    <source>
        <strain>ATCC 39541 / Classical Ogawa 395 / O395</strain>
    </source>
</reference>
<keyword id="KW-0963">Cytoplasm</keyword>
<keyword id="KW-0378">Hydrolase</keyword>
<keyword id="KW-0645">Protease</keyword>
<keyword id="KW-0720">Serine protease</keyword>
<name>CLPP_VIBC3</name>
<dbReference type="EC" id="3.4.21.92" evidence="1"/>
<dbReference type="EMBL" id="CP000627">
    <property type="protein sequence ID" value="ABQ20619.1"/>
    <property type="molecule type" value="Genomic_DNA"/>
</dbReference>
<dbReference type="EMBL" id="CP001235">
    <property type="protein sequence ID" value="ACP10030.1"/>
    <property type="molecule type" value="Genomic_DNA"/>
</dbReference>
<dbReference type="SMR" id="A5F6X0"/>
<dbReference type="MEROPS" id="S14.001"/>
<dbReference type="KEGG" id="vco:VC0395_A1512"/>
<dbReference type="KEGG" id="vcr:VC395_2037"/>
<dbReference type="PATRIC" id="fig|345073.21.peg.1971"/>
<dbReference type="eggNOG" id="COG0740">
    <property type="taxonomic scope" value="Bacteria"/>
</dbReference>
<dbReference type="HOGENOM" id="CLU_058707_3_2_6"/>
<dbReference type="Proteomes" id="UP000000249">
    <property type="component" value="Chromosome 2"/>
</dbReference>
<dbReference type="GO" id="GO:0005737">
    <property type="term" value="C:cytoplasm"/>
    <property type="evidence" value="ECO:0007669"/>
    <property type="project" value="UniProtKB-SubCell"/>
</dbReference>
<dbReference type="GO" id="GO:0009368">
    <property type="term" value="C:endopeptidase Clp complex"/>
    <property type="evidence" value="ECO:0007669"/>
    <property type="project" value="TreeGrafter"/>
</dbReference>
<dbReference type="GO" id="GO:0004176">
    <property type="term" value="F:ATP-dependent peptidase activity"/>
    <property type="evidence" value="ECO:0007669"/>
    <property type="project" value="InterPro"/>
</dbReference>
<dbReference type="GO" id="GO:0051117">
    <property type="term" value="F:ATPase binding"/>
    <property type="evidence" value="ECO:0007669"/>
    <property type="project" value="TreeGrafter"/>
</dbReference>
<dbReference type="GO" id="GO:0004252">
    <property type="term" value="F:serine-type endopeptidase activity"/>
    <property type="evidence" value="ECO:0007669"/>
    <property type="project" value="UniProtKB-UniRule"/>
</dbReference>
<dbReference type="GO" id="GO:0006515">
    <property type="term" value="P:protein quality control for misfolded or incompletely synthesized proteins"/>
    <property type="evidence" value="ECO:0007669"/>
    <property type="project" value="TreeGrafter"/>
</dbReference>
<dbReference type="CDD" id="cd07017">
    <property type="entry name" value="S14_ClpP_2"/>
    <property type="match status" value="1"/>
</dbReference>
<dbReference type="FunFam" id="3.90.226.10:FF:000001">
    <property type="entry name" value="ATP-dependent Clp protease proteolytic subunit"/>
    <property type="match status" value="1"/>
</dbReference>
<dbReference type="Gene3D" id="3.90.226.10">
    <property type="entry name" value="2-enoyl-CoA Hydratase, Chain A, domain 1"/>
    <property type="match status" value="1"/>
</dbReference>
<dbReference type="HAMAP" id="MF_00444">
    <property type="entry name" value="ClpP"/>
    <property type="match status" value="1"/>
</dbReference>
<dbReference type="InterPro" id="IPR001907">
    <property type="entry name" value="ClpP"/>
</dbReference>
<dbReference type="InterPro" id="IPR029045">
    <property type="entry name" value="ClpP/crotonase-like_dom_sf"/>
</dbReference>
<dbReference type="InterPro" id="IPR023562">
    <property type="entry name" value="ClpP/TepA"/>
</dbReference>
<dbReference type="InterPro" id="IPR033135">
    <property type="entry name" value="ClpP_His_AS"/>
</dbReference>
<dbReference type="InterPro" id="IPR018215">
    <property type="entry name" value="ClpP_Ser_AS"/>
</dbReference>
<dbReference type="NCBIfam" id="TIGR00493">
    <property type="entry name" value="clpP"/>
    <property type="match status" value="1"/>
</dbReference>
<dbReference type="NCBIfam" id="NF001368">
    <property type="entry name" value="PRK00277.1"/>
    <property type="match status" value="1"/>
</dbReference>
<dbReference type="NCBIfam" id="NF009205">
    <property type="entry name" value="PRK12553.1"/>
    <property type="match status" value="1"/>
</dbReference>
<dbReference type="PANTHER" id="PTHR10381">
    <property type="entry name" value="ATP-DEPENDENT CLP PROTEASE PROTEOLYTIC SUBUNIT"/>
    <property type="match status" value="1"/>
</dbReference>
<dbReference type="PANTHER" id="PTHR10381:SF70">
    <property type="entry name" value="ATP-DEPENDENT CLP PROTEASE PROTEOLYTIC SUBUNIT"/>
    <property type="match status" value="1"/>
</dbReference>
<dbReference type="Pfam" id="PF00574">
    <property type="entry name" value="CLP_protease"/>
    <property type="match status" value="1"/>
</dbReference>
<dbReference type="PRINTS" id="PR00127">
    <property type="entry name" value="CLPPROTEASEP"/>
</dbReference>
<dbReference type="SUPFAM" id="SSF52096">
    <property type="entry name" value="ClpP/crotonase"/>
    <property type="match status" value="1"/>
</dbReference>
<dbReference type="PROSITE" id="PS00382">
    <property type="entry name" value="CLP_PROTEASE_HIS"/>
    <property type="match status" value="1"/>
</dbReference>
<dbReference type="PROSITE" id="PS00381">
    <property type="entry name" value="CLP_PROTEASE_SER"/>
    <property type="match status" value="1"/>
</dbReference>
<feature type="chain" id="PRO_1000072348" description="ATP-dependent Clp protease proteolytic subunit">
    <location>
        <begin position="1"/>
        <end position="200"/>
    </location>
</feature>
<feature type="active site" description="Nucleophile" evidence="1">
    <location>
        <position position="103"/>
    </location>
</feature>
<feature type="active site" evidence="1">
    <location>
        <position position="128"/>
    </location>
</feature>